<organism>
    <name type="scientific">Schizosaccharomyces pombe (strain 972 / ATCC 24843)</name>
    <name type="common">Fission yeast</name>
    <dbReference type="NCBI Taxonomy" id="284812"/>
    <lineage>
        <taxon>Eukaryota</taxon>
        <taxon>Fungi</taxon>
        <taxon>Dikarya</taxon>
        <taxon>Ascomycota</taxon>
        <taxon>Taphrinomycotina</taxon>
        <taxon>Schizosaccharomycetes</taxon>
        <taxon>Schizosaccharomycetales</taxon>
        <taxon>Schizosaccharomycetaceae</taxon>
        <taxon>Schizosaccharomyces</taxon>
    </lineage>
</organism>
<dbReference type="EMBL" id="CU329671">
    <property type="protein sequence ID" value="CAA19056.2"/>
    <property type="molecule type" value="Genomic_DNA"/>
</dbReference>
<dbReference type="PIR" id="T40303">
    <property type="entry name" value="T40303"/>
</dbReference>
<dbReference type="RefSeq" id="NP_595336.1">
    <property type="nucleotide sequence ID" value="NM_001021244.2"/>
</dbReference>
<dbReference type="SMR" id="O59705"/>
<dbReference type="BioGRID" id="276906">
    <property type="interactions" value="2"/>
</dbReference>
<dbReference type="STRING" id="284812.O59705"/>
<dbReference type="iPTMnet" id="O59705"/>
<dbReference type="PaxDb" id="4896-SPBC36.08c.1"/>
<dbReference type="EnsemblFungi" id="SPBC36.08c.1">
    <property type="protein sequence ID" value="SPBC36.08c.1:pep"/>
    <property type="gene ID" value="SPBC36.08c"/>
</dbReference>
<dbReference type="GeneID" id="2540377"/>
<dbReference type="KEGG" id="spo:2540377"/>
<dbReference type="PomBase" id="SPBC36.08c">
    <property type="gene designation" value="cog2"/>
</dbReference>
<dbReference type="VEuPathDB" id="FungiDB:SPBC36.08c"/>
<dbReference type="HOGENOM" id="CLU_1428770_0_0_1"/>
<dbReference type="InParanoid" id="O59705"/>
<dbReference type="OMA" id="EDEFTPD"/>
<dbReference type="PhylomeDB" id="O59705"/>
<dbReference type="PRO" id="PR:O59705"/>
<dbReference type="Proteomes" id="UP000002485">
    <property type="component" value="Chromosome II"/>
</dbReference>
<dbReference type="GO" id="GO:0005829">
    <property type="term" value="C:cytosol"/>
    <property type="evidence" value="ECO:0007005"/>
    <property type="project" value="PomBase"/>
</dbReference>
<dbReference type="GO" id="GO:0000139">
    <property type="term" value="C:Golgi membrane"/>
    <property type="evidence" value="ECO:0007669"/>
    <property type="project" value="UniProtKB-SubCell"/>
</dbReference>
<dbReference type="GO" id="GO:0017119">
    <property type="term" value="C:Golgi transport complex"/>
    <property type="evidence" value="ECO:0000266"/>
    <property type="project" value="PomBase"/>
</dbReference>
<dbReference type="GO" id="GO:0005634">
    <property type="term" value="C:nucleus"/>
    <property type="evidence" value="ECO:0007005"/>
    <property type="project" value="PomBase"/>
</dbReference>
<dbReference type="GO" id="GO:0006888">
    <property type="term" value="P:endoplasmic reticulum to Golgi vesicle-mediated transport"/>
    <property type="evidence" value="ECO:0000266"/>
    <property type="project" value="PomBase"/>
</dbReference>
<dbReference type="GO" id="GO:0007030">
    <property type="term" value="P:Golgi organization"/>
    <property type="evidence" value="ECO:0007669"/>
    <property type="project" value="InterPro"/>
</dbReference>
<dbReference type="GO" id="GO:0006886">
    <property type="term" value="P:intracellular protein transport"/>
    <property type="evidence" value="ECO:0000303"/>
    <property type="project" value="PomBase"/>
</dbReference>
<dbReference type="GO" id="GO:0000301">
    <property type="term" value="P:retrograde transport, vesicle recycling within Golgi"/>
    <property type="evidence" value="ECO:0000266"/>
    <property type="project" value="PomBase"/>
</dbReference>
<dbReference type="InterPro" id="IPR009316">
    <property type="entry name" value="COG2"/>
</dbReference>
<dbReference type="InterPro" id="IPR024602">
    <property type="entry name" value="COG_su2_N"/>
</dbReference>
<dbReference type="PANTHER" id="PTHR12961">
    <property type="entry name" value="CONSERVED OLIGOMERIC GOLGI COMPLEX COMPONENT 2"/>
    <property type="match status" value="1"/>
</dbReference>
<dbReference type="PANTHER" id="PTHR12961:SF0">
    <property type="entry name" value="CONSERVED OLIGOMERIC GOLGI COMPLEX SUBUNIT 2"/>
    <property type="match status" value="1"/>
</dbReference>
<dbReference type="Pfam" id="PF06148">
    <property type="entry name" value="COG2_N"/>
    <property type="match status" value="1"/>
</dbReference>
<keyword id="KW-0333">Golgi apparatus</keyword>
<keyword id="KW-0472">Membrane</keyword>
<keyword id="KW-0539">Nucleus</keyword>
<keyword id="KW-0653">Protein transport</keyword>
<keyword id="KW-1185">Reference proteome</keyword>
<keyword id="KW-0813">Transport</keyword>
<proteinExistence type="inferred from homology"/>
<accession>O59705</accession>
<protein>
    <recommendedName>
        <fullName>Conserved oligomeric Golgi complex subunit 2</fullName>
        <shortName>COG complex subunit 2</shortName>
    </recommendedName>
    <alternativeName>
        <fullName>Component of oligomeric Golgi complex 2</fullName>
    </alternativeName>
</protein>
<gene>
    <name type="primary">cog2</name>
    <name type="ORF">SPBC36.08c</name>
</gene>
<sequence length="191" mass="21829">MTEKDADSGSDLVDAFLSDAYLNTEELRKDGPFSPDEFLVSKRFLGLDGLVNELSRLFEQVNNELMLLVKDNYQDFVHLGSRMKSGNTKVSTLISSIHRSEEQLKNSKQSLIGHSTEIQNNLKHKQDVENEKLIASNLLLLDQILKFLKSNDSSHPLWLESLNNAQRLCDTYKDHPWVQSISPTLINYIKH</sequence>
<comment type="function">
    <text evidence="1">Required for normal Golgi morphology and function.</text>
</comment>
<comment type="subunit">
    <text evidence="1">Component of the conserved oligomeric Golgi complex which is composed of eight different subunits and is required for normal Golgi morphology and localization.</text>
</comment>
<comment type="subcellular location">
    <subcellularLocation>
        <location evidence="2">Golgi apparatus membrane</location>
        <topology evidence="2">Peripheral membrane protein</topology>
        <orientation evidence="2">Cytoplasmic side</orientation>
    </subcellularLocation>
    <subcellularLocation>
        <location evidence="2">Nucleus</location>
    </subcellularLocation>
</comment>
<comment type="similarity">
    <text evidence="3">Belongs to the COG2 family.</text>
</comment>
<feature type="chain" id="PRO_0000339334" description="Conserved oligomeric Golgi complex subunit 2">
    <location>
        <begin position="1"/>
        <end position="191"/>
    </location>
</feature>
<name>COG2_SCHPO</name>
<reference key="1">
    <citation type="journal article" date="2002" name="Nature">
        <title>The genome sequence of Schizosaccharomyces pombe.</title>
        <authorList>
            <person name="Wood V."/>
            <person name="Gwilliam R."/>
            <person name="Rajandream M.A."/>
            <person name="Lyne M.H."/>
            <person name="Lyne R."/>
            <person name="Stewart A."/>
            <person name="Sgouros J.G."/>
            <person name="Peat N."/>
            <person name="Hayles J."/>
            <person name="Baker S.G."/>
            <person name="Basham D."/>
            <person name="Bowman S."/>
            <person name="Brooks K."/>
            <person name="Brown D."/>
            <person name="Brown S."/>
            <person name="Chillingworth T."/>
            <person name="Churcher C.M."/>
            <person name="Collins M."/>
            <person name="Connor R."/>
            <person name="Cronin A."/>
            <person name="Davis P."/>
            <person name="Feltwell T."/>
            <person name="Fraser A."/>
            <person name="Gentles S."/>
            <person name="Goble A."/>
            <person name="Hamlin N."/>
            <person name="Harris D.E."/>
            <person name="Hidalgo J."/>
            <person name="Hodgson G."/>
            <person name="Holroyd S."/>
            <person name="Hornsby T."/>
            <person name="Howarth S."/>
            <person name="Huckle E.J."/>
            <person name="Hunt S."/>
            <person name="Jagels K."/>
            <person name="James K.D."/>
            <person name="Jones L."/>
            <person name="Jones M."/>
            <person name="Leather S."/>
            <person name="McDonald S."/>
            <person name="McLean J."/>
            <person name="Mooney P."/>
            <person name="Moule S."/>
            <person name="Mungall K.L."/>
            <person name="Murphy L.D."/>
            <person name="Niblett D."/>
            <person name="Odell C."/>
            <person name="Oliver K."/>
            <person name="O'Neil S."/>
            <person name="Pearson D."/>
            <person name="Quail M.A."/>
            <person name="Rabbinowitsch E."/>
            <person name="Rutherford K.M."/>
            <person name="Rutter S."/>
            <person name="Saunders D."/>
            <person name="Seeger K."/>
            <person name="Sharp S."/>
            <person name="Skelton J."/>
            <person name="Simmonds M.N."/>
            <person name="Squares R."/>
            <person name="Squares S."/>
            <person name="Stevens K."/>
            <person name="Taylor K."/>
            <person name="Taylor R.G."/>
            <person name="Tivey A."/>
            <person name="Walsh S.V."/>
            <person name="Warren T."/>
            <person name="Whitehead S."/>
            <person name="Woodward J.R."/>
            <person name="Volckaert G."/>
            <person name="Aert R."/>
            <person name="Robben J."/>
            <person name="Grymonprez B."/>
            <person name="Weltjens I."/>
            <person name="Vanstreels E."/>
            <person name="Rieger M."/>
            <person name="Schaefer M."/>
            <person name="Mueller-Auer S."/>
            <person name="Gabel C."/>
            <person name="Fuchs M."/>
            <person name="Duesterhoeft A."/>
            <person name="Fritzc C."/>
            <person name="Holzer E."/>
            <person name="Moestl D."/>
            <person name="Hilbert H."/>
            <person name="Borzym K."/>
            <person name="Langer I."/>
            <person name="Beck A."/>
            <person name="Lehrach H."/>
            <person name="Reinhardt R."/>
            <person name="Pohl T.M."/>
            <person name="Eger P."/>
            <person name="Zimmermann W."/>
            <person name="Wedler H."/>
            <person name="Wambutt R."/>
            <person name="Purnelle B."/>
            <person name="Goffeau A."/>
            <person name="Cadieu E."/>
            <person name="Dreano S."/>
            <person name="Gloux S."/>
            <person name="Lelaure V."/>
            <person name="Mottier S."/>
            <person name="Galibert F."/>
            <person name="Aves S.J."/>
            <person name="Xiang Z."/>
            <person name="Hunt C."/>
            <person name="Moore K."/>
            <person name="Hurst S.M."/>
            <person name="Lucas M."/>
            <person name="Rochet M."/>
            <person name="Gaillardin C."/>
            <person name="Tallada V.A."/>
            <person name="Garzon A."/>
            <person name="Thode G."/>
            <person name="Daga R.R."/>
            <person name="Cruzado L."/>
            <person name="Jimenez J."/>
            <person name="Sanchez M."/>
            <person name="del Rey F."/>
            <person name="Benito J."/>
            <person name="Dominguez A."/>
            <person name="Revuelta J.L."/>
            <person name="Moreno S."/>
            <person name="Armstrong J."/>
            <person name="Forsburg S.L."/>
            <person name="Cerutti L."/>
            <person name="Lowe T."/>
            <person name="McCombie W.R."/>
            <person name="Paulsen I."/>
            <person name="Potashkin J."/>
            <person name="Shpakovski G.V."/>
            <person name="Ussery D."/>
            <person name="Barrell B.G."/>
            <person name="Nurse P."/>
        </authorList>
    </citation>
    <scope>NUCLEOTIDE SEQUENCE [LARGE SCALE GENOMIC DNA]</scope>
    <source>
        <strain>972 / ATCC 24843</strain>
    </source>
</reference>
<reference key="2">
    <citation type="journal article" date="2006" name="Nat. Biotechnol.">
        <title>ORFeome cloning and global analysis of protein localization in the fission yeast Schizosaccharomyces pombe.</title>
        <authorList>
            <person name="Matsuyama A."/>
            <person name="Arai R."/>
            <person name="Yashiroda Y."/>
            <person name="Shirai A."/>
            <person name="Kamata A."/>
            <person name="Sekido S."/>
            <person name="Kobayashi Y."/>
            <person name="Hashimoto A."/>
            <person name="Hamamoto M."/>
            <person name="Hiraoka Y."/>
            <person name="Horinouchi S."/>
            <person name="Yoshida M."/>
        </authorList>
    </citation>
    <scope>SUBCELLULAR LOCATION [LARGE SCALE ANALYSIS]</scope>
</reference>
<evidence type="ECO:0000250" key="1"/>
<evidence type="ECO:0000269" key="2">
    <source>
    </source>
</evidence>
<evidence type="ECO:0000305" key="3"/>